<gene>
    <name evidence="1" type="primary">cysH</name>
    <name type="ordered locus">YPTB0761</name>
</gene>
<feature type="chain" id="PRO_1000008948" description="Phosphoadenosine 5'-phosphosulfate reductase">
    <location>
        <begin position="1"/>
        <end position="244"/>
    </location>
</feature>
<feature type="active site" description="Nucleophile; cysteine thiosulfonate intermediate" evidence="1">
    <location>
        <position position="239"/>
    </location>
</feature>
<accession>Q66ED2</accession>
<dbReference type="EC" id="1.8.4.8" evidence="1"/>
<dbReference type="EMBL" id="BX936398">
    <property type="protein sequence ID" value="CAH20001.1"/>
    <property type="molecule type" value="Genomic_DNA"/>
</dbReference>
<dbReference type="RefSeq" id="WP_011191774.1">
    <property type="nucleotide sequence ID" value="NC_006155.1"/>
</dbReference>
<dbReference type="SMR" id="Q66ED2"/>
<dbReference type="GeneID" id="49787233"/>
<dbReference type="KEGG" id="ypo:BZ17_1795"/>
<dbReference type="KEGG" id="yps:YPTB0761"/>
<dbReference type="PATRIC" id="fig|273123.14.peg.1900"/>
<dbReference type="UniPathway" id="UPA00140">
    <property type="reaction ID" value="UER00206"/>
</dbReference>
<dbReference type="Proteomes" id="UP000001011">
    <property type="component" value="Chromosome"/>
</dbReference>
<dbReference type="GO" id="GO:0005737">
    <property type="term" value="C:cytoplasm"/>
    <property type="evidence" value="ECO:0007669"/>
    <property type="project" value="UniProtKB-SubCell"/>
</dbReference>
<dbReference type="GO" id="GO:0004604">
    <property type="term" value="F:phosphoadenylyl-sulfate reductase (thioredoxin) activity"/>
    <property type="evidence" value="ECO:0007669"/>
    <property type="project" value="UniProtKB-UniRule"/>
</dbReference>
<dbReference type="GO" id="GO:0070814">
    <property type="term" value="P:hydrogen sulfide biosynthetic process"/>
    <property type="evidence" value="ECO:0007669"/>
    <property type="project" value="UniProtKB-UniRule"/>
</dbReference>
<dbReference type="GO" id="GO:0019379">
    <property type="term" value="P:sulfate assimilation, phosphoadenylyl sulfate reduction by phosphoadenylyl-sulfate reductase (thioredoxin)"/>
    <property type="evidence" value="ECO:0007669"/>
    <property type="project" value="UniProtKB-UniRule"/>
</dbReference>
<dbReference type="CDD" id="cd23945">
    <property type="entry name" value="PAPS_reductase"/>
    <property type="match status" value="1"/>
</dbReference>
<dbReference type="FunFam" id="3.40.50.620:FF:000043">
    <property type="entry name" value="Phosphoadenosine phosphosulfate reductase"/>
    <property type="match status" value="1"/>
</dbReference>
<dbReference type="Gene3D" id="3.40.50.620">
    <property type="entry name" value="HUPs"/>
    <property type="match status" value="1"/>
</dbReference>
<dbReference type="HAMAP" id="MF_00063">
    <property type="entry name" value="CysH"/>
    <property type="match status" value="1"/>
</dbReference>
<dbReference type="InterPro" id="IPR004511">
    <property type="entry name" value="PAPS/APS_Rdtase"/>
</dbReference>
<dbReference type="InterPro" id="IPR002500">
    <property type="entry name" value="PAPS_reduct_dom"/>
</dbReference>
<dbReference type="InterPro" id="IPR011800">
    <property type="entry name" value="PAPS_reductase_CysH"/>
</dbReference>
<dbReference type="InterPro" id="IPR014729">
    <property type="entry name" value="Rossmann-like_a/b/a_fold"/>
</dbReference>
<dbReference type="NCBIfam" id="TIGR00434">
    <property type="entry name" value="cysH"/>
    <property type="match status" value="1"/>
</dbReference>
<dbReference type="NCBIfam" id="TIGR02057">
    <property type="entry name" value="PAPS_reductase"/>
    <property type="match status" value="1"/>
</dbReference>
<dbReference type="NCBIfam" id="NF002537">
    <property type="entry name" value="PRK02090.1"/>
    <property type="match status" value="1"/>
</dbReference>
<dbReference type="PANTHER" id="PTHR46509">
    <property type="entry name" value="PHOSPHOADENOSINE PHOSPHOSULFATE REDUCTASE"/>
    <property type="match status" value="1"/>
</dbReference>
<dbReference type="PANTHER" id="PTHR46509:SF1">
    <property type="entry name" value="PHOSPHOADENOSINE PHOSPHOSULFATE REDUCTASE"/>
    <property type="match status" value="1"/>
</dbReference>
<dbReference type="Pfam" id="PF01507">
    <property type="entry name" value="PAPS_reduct"/>
    <property type="match status" value="1"/>
</dbReference>
<dbReference type="PIRSF" id="PIRSF000857">
    <property type="entry name" value="PAPS_reductase"/>
    <property type="match status" value="1"/>
</dbReference>
<dbReference type="SUPFAM" id="SSF52402">
    <property type="entry name" value="Adenine nucleotide alpha hydrolases-like"/>
    <property type="match status" value="1"/>
</dbReference>
<sequence length="244" mass="27852">MSQFNLSELNALPKAKQAAALVLVNGQLEHLTAQERVSWALDNLPGEFVLSSSFGIQAAVCLHLVTRQRPDIPVILTDTGYLFPETYRFIDDLTEKLQLNLQVFRAAHSPAWQEARYGKLWEQGVEGIERYNTLNKVEPMNRALEALGAQTWFAGLRREQSGGRSQLPVLALQRGIFKLLPIIDWDNRQVYQYLTQHGLSYHPLWEQGYLSVGDTHTTRKWEPGMSEEETRFFGLKRECGLHEG</sequence>
<reference key="1">
    <citation type="journal article" date="2004" name="Proc. Natl. Acad. Sci. U.S.A.">
        <title>Insights into the evolution of Yersinia pestis through whole-genome comparison with Yersinia pseudotuberculosis.</title>
        <authorList>
            <person name="Chain P.S.G."/>
            <person name="Carniel E."/>
            <person name="Larimer F.W."/>
            <person name="Lamerdin J."/>
            <person name="Stoutland P.O."/>
            <person name="Regala W.M."/>
            <person name="Georgescu A.M."/>
            <person name="Vergez L.M."/>
            <person name="Land M.L."/>
            <person name="Motin V.L."/>
            <person name="Brubaker R.R."/>
            <person name="Fowler J."/>
            <person name="Hinnebusch J."/>
            <person name="Marceau M."/>
            <person name="Medigue C."/>
            <person name="Simonet M."/>
            <person name="Chenal-Francisque V."/>
            <person name="Souza B."/>
            <person name="Dacheux D."/>
            <person name="Elliott J.M."/>
            <person name="Derbise A."/>
            <person name="Hauser L.J."/>
            <person name="Garcia E."/>
        </authorList>
    </citation>
    <scope>NUCLEOTIDE SEQUENCE [LARGE SCALE GENOMIC DNA]</scope>
    <source>
        <strain>IP32953</strain>
    </source>
</reference>
<comment type="function">
    <text evidence="1">Catalyzes the formation of sulfite from phosphoadenosine 5'-phosphosulfate (PAPS) using thioredoxin as an electron donor.</text>
</comment>
<comment type="catalytic activity">
    <reaction evidence="1">
        <text>[thioredoxin]-disulfide + sulfite + adenosine 3',5'-bisphosphate + 2 H(+) = [thioredoxin]-dithiol + 3'-phosphoadenylyl sulfate</text>
        <dbReference type="Rhea" id="RHEA:11724"/>
        <dbReference type="Rhea" id="RHEA-COMP:10698"/>
        <dbReference type="Rhea" id="RHEA-COMP:10700"/>
        <dbReference type="ChEBI" id="CHEBI:15378"/>
        <dbReference type="ChEBI" id="CHEBI:17359"/>
        <dbReference type="ChEBI" id="CHEBI:29950"/>
        <dbReference type="ChEBI" id="CHEBI:50058"/>
        <dbReference type="ChEBI" id="CHEBI:58339"/>
        <dbReference type="ChEBI" id="CHEBI:58343"/>
        <dbReference type="EC" id="1.8.4.8"/>
    </reaction>
</comment>
<comment type="pathway">
    <text evidence="1">Sulfur metabolism; hydrogen sulfide biosynthesis; sulfite from sulfate: step 3/3.</text>
</comment>
<comment type="subcellular location">
    <subcellularLocation>
        <location evidence="1">Cytoplasm</location>
    </subcellularLocation>
</comment>
<comment type="similarity">
    <text evidence="1">Belongs to the PAPS reductase family. CysH subfamily.</text>
</comment>
<name>CYSH_YERPS</name>
<proteinExistence type="inferred from homology"/>
<organism>
    <name type="scientific">Yersinia pseudotuberculosis serotype I (strain IP32953)</name>
    <dbReference type="NCBI Taxonomy" id="273123"/>
    <lineage>
        <taxon>Bacteria</taxon>
        <taxon>Pseudomonadati</taxon>
        <taxon>Pseudomonadota</taxon>
        <taxon>Gammaproteobacteria</taxon>
        <taxon>Enterobacterales</taxon>
        <taxon>Yersiniaceae</taxon>
        <taxon>Yersinia</taxon>
    </lineage>
</organism>
<evidence type="ECO:0000255" key="1">
    <source>
        <dbReference type="HAMAP-Rule" id="MF_00063"/>
    </source>
</evidence>
<keyword id="KW-0963">Cytoplasm</keyword>
<keyword id="KW-0560">Oxidoreductase</keyword>
<protein>
    <recommendedName>
        <fullName evidence="1">Phosphoadenosine 5'-phosphosulfate reductase</fullName>
        <shortName evidence="1">PAPS reductase</shortName>
        <ecNumber evidence="1">1.8.4.8</ecNumber>
    </recommendedName>
    <alternativeName>
        <fullName evidence="1">3'-phosphoadenylylsulfate reductase</fullName>
    </alternativeName>
    <alternativeName>
        <fullName evidence="1">PAPS reductase, thioredoxin dependent</fullName>
    </alternativeName>
    <alternativeName>
        <fullName evidence="1">PAPS sulfotransferase</fullName>
    </alternativeName>
    <alternativeName>
        <fullName evidence="1">PAdoPS reductase</fullName>
    </alternativeName>
</protein>